<organism>
    <name type="scientific">Oceanobacillus iheyensis (strain DSM 14371 / CIP 107618 / JCM 11309 / KCTC 3954 / HTE831)</name>
    <dbReference type="NCBI Taxonomy" id="221109"/>
    <lineage>
        <taxon>Bacteria</taxon>
        <taxon>Bacillati</taxon>
        <taxon>Bacillota</taxon>
        <taxon>Bacilli</taxon>
        <taxon>Bacillales</taxon>
        <taxon>Bacillaceae</taxon>
        <taxon>Oceanobacillus</taxon>
    </lineage>
</organism>
<protein>
    <recommendedName>
        <fullName evidence="2">Small ribosomal subunit protein uS8</fullName>
    </recommendedName>
    <alternativeName>
        <fullName evidence="3">30S ribosomal protein S8</fullName>
    </alternativeName>
</protein>
<reference key="1">
    <citation type="journal article" date="2002" name="Nucleic Acids Res.">
        <title>Genome sequence of Oceanobacillus iheyensis isolated from the Iheya Ridge and its unexpected adaptive capabilities to extreme environments.</title>
        <authorList>
            <person name="Takami H."/>
            <person name="Takaki Y."/>
            <person name="Uchiyama I."/>
        </authorList>
    </citation>
    <scope>NUCLEOTIDE SEQUENCE [LARGE SCALE GENOMIC DNA]</scope>
    <source>
        <strain>DSM 14371 / CIP 107618 / JCM 11309 / KCTC 3954 / HTE831</strain>
    </source>
</reference>
<name>RS8_OCEIH</name>
<proteinExistence type="inferred from homology"/>
<feature type="initiator methionine" description="Removed" evidence="1">
    <location>
        <position position="1"/>
    </location>
</feature>
<feature type="chain" id="PRO_0000126455" description="Small ribosomal subunit protein uS8">
    <location>
        <begin position="2"/>
        <end position="132"/>
    </location>
</feature>
<accession>Q8ETW9</accession>
<keyword id="KW-1185">Reference proteome</keyword>
<keyword id="KW-0687">Ribonucleoprotein</keyword>
<keyword id="KW-0689">Ribosomal protein</keyword>
<keyword id="KW-0694">RNA-binding</keyword>
<keyword id="KW-0699">rRNA-binding</keyword>
<dbReference type="EMBL" id="BA000028">
    <property type="protein sequence ID" value="BAC12089.1"/>
    <property type="molecule type" value="Genomic_DNA"/>
</dbReference>
<dbReference type="RefSeq" id="WP_011064536.1">
    <property type="nucleotide sequence ID" value="NC_004193.1"/>
</dbReference>
<dbReference type="SMR" id="Q8ETW9"/>
<dbReference type="STRING" id="221109.gene:10732323"/>
<dbReference type="KEGG" id="oih:OB0133"/>
<dbReference type="eggNOG" id="COG0096">
    <property type="taxonomic scope" value="Bacteria"/>
</dbReference>
<dbReference type="HOGENOM" id="CLU_098428_0_2_9"/>
<dbReference type="OrthoDB" id="9802617at2"/>
<dbReference type="PhylomeDB" id="Q8ETW9"/>
<dbReference type="Proteomes" id="UP000000822">
    <property type="component" value="Chromosome"/>
</dbReference>
<dbReference type="GO" id="GO:1990904">
    <property type="term" value="C:ribonucleoprotein complex"/>
    <property type="evidence" value="ECO:0007669"/>
    <property type="project" value="UniProtKB-KW"/>
</dbReference>
<dbReference type="GO" id="GO:0005840">
    <property type="term" value="C:ribosome"/>
    <property type="evidence" value="ECO:0007669"/>
    <property type="project" value="UniProtKB-KW"/>
</dbReference>
<dbReference type="GO" id="GO:0019843">
    <property type="term" value="F:rRNA binding"/>
    <property type="evidence" value="ECO:0007669"/>
    <property type="project" value="UniProtKB-UniRule"/>
</dbReference>
<dbReference type="GO" id="GO:0003735">
    <property type="term" value="F:structural constituent of ribosome"/>
    <property type="evidence" value="ECO:0007669"/>
    <property type="project" value="InterPro"/>
</dbReference>
<dbReference type="GO" id="GO:0006412">
    <property type="term" value="P:translation"/>
    <property type="evidence" value="ECO:0007669"/>
    <property type="project" value="UniProtKB-UniRule"/>
</dbReference>
<dbReference type="FunFam" id="3.30.1370.30:FF:000002">
    <property type="entry name" value="30S ribosomal protein S8"/>
    <property type="match status" value="1"/>
</dbReference>
<dbReference type="FunFam" id="3.30.1490.10:FF:000001">
    <property type="entry name" value="30S ribosomal protein S8"/>
    <property type="match status" value="1"/>
</dbReference>
<dbReference type="Gene3D" id="3.30.1370.30">
    <property type="match status" value="1"/>
</dbReference>
<dbReference type="Gene3D" id="3.30.1490.10">
    <property type="match status" value="1"/>
</dbReference>
<dbReference type="HAMAP" id="MF_01302_B">
    <property type="entry name" value="Ribosomal_uS8_B"/>
    <property type="match status" value="1"/>
</dbReference>
<dbReference type="InterPro" id="IPR000630">
    <property type="entry name" value="Ribosomal_uS8"/>
</dbReference>
<dbReference type="InterPro" id="IPR047863">
    <property type="entry name" value="Ribosomal_uS8_CS"/>
</dbReference>
<dbReference type="InterPro" id="IPR035987">
    <property type="entry name" value="Ribosomal_uS8_sf"/>
</dbReference>
<dbReference type="NCBIfam" id="NF001109">
    <property type="entry name" value="PRK00136.1"/>
    <property type="match status" value="1"/>
</dbReference>
<dbReference type="PANTHER" id="PTHR11758">
    <property type="entry name" value="40S RIBOSOMAL PROTEIN S15A"/>
    <property type="match status" value="1"/>
</dbReference>
<dbReference type="Pfam" id="PF00410">
    <property type="entry name" value="Ribosomal_S8"/>
    <property type="match status" value="1"/>
</dbReference>
<dbReference type="SUPFAM" id="SSF56047">
    <property type="entry name" value="Ribosomal protein S8"/>
    <property type="match status" value="1"/>
</dbReference>
<dbReference type="PROSITE" id="PS00053">
    <property type="entry name" value="RIBOSOMAL_S8"/>
    <property type="match status" value="1"/>
</dbReference>
<evidence type="ECO:0000250" key="1"/>
<evidence type="ECO:0000255" key="2">
    <source>
        <dbReference type="HAMAP-Rule" id="MF_01302"/>
    </source>
</evidence>
<evidence type="ECO:0000305" key="3"/>
<sequence>MVMTDPIADMLTRIRNANMVKHEKLELPASNIKKEIADILKREGFVKDYELIEDNKQGVLRIFLKYSANEDKVISGIKRISKPGLRVYAKADEVPRVLNGLGIAIVSTSNGLLSDKEARSQAVGGEVLAYVW</sequence>
<comment type="function">
    <text evidence="2">One of the primary rRNA binding proteins, it binds directly to 16S rRNA central domain where it helps coordinate assembly of the platform of the 30S subunit.</text>
</comment>
<comment type="subunit">
    <text evidence="2">Part of the 30S ribosomal subunit. Contacts proteins S5 and S12.</text>
</comment>
<comment type="similarity">
    <text evidence="2">Belongs to the universal ribosomal protein uS8 family.</text>
</comment>
<gene>
    <name evidence="2" type="primary">rpsH</name>
    <name type="ordered locus">OB0133</name>
</gene>